<comment type="function">
    <text evidence="2">Mitochondrial dehydrogenase involved in pathways of fatty acid, branched-chain amino acid and steroid metabolism. Acts as (S)-3-hydroxyacyl-CoA dehydrogenase in mitochondrial fatty acid beta-oxidation, a major degradation pathway of fatty acids. Catalyzes the third step in the beta-oxidation cycle, namely the reversible conversion of (S)-3-hydroxyacyl-CoA to 3-ketoacyl-CoA. Preferentially accepts straight medium- and short-chain acyl-CoA substrates with highest efficiency for (3S)-hydroxybutanoyl-CoA. Acts as 3-hydroxy-2-methylbutyryl-CoA dehydrogenase in branched-chain amino acid catabolic pathway. Catalyzes the oxidation of 3-hydroxy-2-methylbutanoyl-CoA into 2-methyl-3-oxobutanoyl-CoA, a step in isoleucine degradation pathway. Has hydroxysteroid dehydrogenase activity toward steroid hormones and bile acids. Catalyzes the oxidation of 3alpha-, 17beta-, 20beta- and 21-hydroxysteroids and 7alpha- and 7beta-hydroxy bile acids. Oxidizes allopregnanolone/brexanolone at the 3alpha-hydroxyl group, which is known to be critical for the activation of gamma-aminobutyric acid receptors (GABAARs) chloride channel. Has phospholipase C-like activity toward cardiolipin and its oxidized species. Likely oxidizes the 2'-hydroxyl in the head group of cardiolipin to form a ketone intermediate that undergoes nucleophilic attack by water and fragments into diacylglycerol, dihydroxyacetone and orthophosphate. Has higher affinity for cardiolipin with oxidized fatty acids and may degrade these species during the oxidative stress response to protect cells from apoptosis. By interacting with intracellular amyloid-beta, it may contribute to the neuronal dysfunction associated with Alzheimer disease (AD). Essential for structural and functional integrity of mitochondria.</text>
</comment>
<comment type="function">
    <text evidence="2">In addition to mitochondrial dehydrogenase activity, moonlights as a component of mitochondrial ribonuclease P, a complex that cleaves tRNA molecules in their 5'-ends. Together with TRMT10C/MRPP1, forms a subcomplex of the mitochondrial ribonuclease P, named MRPP1-MRPP2 subcomplex, which displays functions that are independent of the ribonuclease P activity. The MRPP1-MRPP2 subcomplex catalyzes the formation of N(1)-methylguanine and N(1)-methyladenine at position 9 (m1G9 and m1A9, respectively) in tRNAs; HSD17B10/MRPP2 acting as a non-catalytic subunit. The MRPP1-MRPP2 subcomplex also acts as a tRNA maturation platform: following 5'-end cleavage by the mitochondrial ribonuclease P complex, the MRPP1-MRPP2 subcomplex enhances the efficiency of 3'-processing catalyzed by ELAC2, retains the tRNA product after ELAC2 processing and presents the nascent tRNA to the mitochondrial CCA tRNA nucleotidyltransferase TRNT1 enzyme. Associates with mitochondrial DNA complexes at the nucleoids to initiate RNA processing and ribosome assembly.</text>
</comment>
<comment type="catalytic activity">
    <reaction evidence="2">
        <text>a (3S)-3-hydroxyacyl-CoA + NAD(+) = a 3-oxoacyl-CoA + NADH + H(+)</text>
        <dbReference type="Rhea" id="RHEA:22432"/>
        <dbReference type="ChEBI" id="CHEBI:15378"/>
        <dbReference type="ChEBI" id="CHEBI:57318"/>
        <dbReference type="ChEBI" id="CHEBI:57540"/>
        <dbReference type="ChEBI" id="CHEBI:57945"/>
        <dbReference type="ChEBI" id="CHEBI:90726"/>
        <dbReference type="EC" id="1.1.1.35"/>
    </reaction>
    <physiologicalReaction direction="left-to-right" evidence="2">
        <dbReference type="Rhea" id="RHEA:22433"/>
    </physiologicalReaction>
    <physiologicalReaction direction="right-to-left" evidence="2">
        <dbReference type="Rhea" id="RHEA:22434"/>
    </physiologicalReaction>
</comment>
<comment type="catalytic activity">
    <reaction evidence="2">
        <text>(2S,3S)-3-hydroxy-2-methylbutanoyl-CoA + NAD(+) = 2-methyl-3-oxobutanoyl-CoA + NADH + H(+)</text>
        <dbReference type="Rhea" id="RHEA:13281"/>
        <dbReference type="ChEBI" id="CHEBI:15378"/>
        <dbReference type="ChEBI" id="CHEBI:57312"/>
        <dbReference type="ChEBI" id="CHEBI:57335"/>
        <dbReference type="ChEBI" id="CHEBI:57540"/>
        <dbReference type="ChEBI" id="CHEBI:57945"/>
        <dbReference type="EC" id="1.1.1.178"/>
    </reaction>
    <physiologicalReaction direction="left-to-right" evidence="2">
        <dbReference type="Rhea" id="RHEA:13282"/>
    </physiologicalReaction>
</comment>
<comment type="catalytic activity">
    <reaction evidence="2">
        <text>testosterone + NAD(+) = androst-4-ene-3,17-dione + NADH + H(+)</text>
        <dbReference type="Rhea" id="RHEA:14929"/>
        <dbReference type="ChEBI" id="CHEBI:15378"/>
        <dbReference type="ChEBI" id="CHEBI:16422"/>
        <dbReference type="ChEBI" id="CHEBI:17347"/>
        <dbReference type="ChEBI" id="CHEBI:57540"/>
        <dbReference type="ChEBI" id="CHEBI:57945"/>
        <dbReference type="EC" id="1.1.1.239"/>
    </reaction>
    <physiologicalReaction direction="left-to-right" evidence="2">
        <dbReference type="Rhea" id="RHEA:14930"/>
    </physiologicalReaction>
</comment>
<comment type="catalytic activity">
    <reaction evidence="2">
        <text>5alpha-androstane-3alpha,17beta-diol + NAD(+) = 17beta-hydroxy-5alpha-androstan-3-one + NADH + H(+)</text>
        <dbReference type="Rhea" id="RHEA:42004"/>
        <dbReference type="ChEBI" id="CHEBI:15378"/>
        <dbReference type="ChEBI" id="CHEBI:16330"/>
        <dbReference type="ChEBI" id="CHEBI:36713"/>
        <dbReference type="ChEBI" id="CHEBI:57540"/>
        <dbReference type="ChEBI" id="CHEBI:57945"/>
        <dbReference type="EC" id="1.1.1.53"/>
    </reaction>
    <physiologicalReaction direction="right-to-left" evidence="2">
        <dbReference type="Rhea" id="RHEA:42006"/>
    </physiologicalReaction>
</comment>
<comment type="catalytic activity">
    <reaction evidence="2">
        <text>17beta-estradiol + NAD(+) = estrone + NADH + H(+)</text>
        <dbReference type="Rhea" id="RHEA:24612"/>
        <dbReference type="ChEBI" id="CHEBI:15378"/>
        <dbReference type="ChEBI" id="CHEBI:16469"/>
        <dbReference type="ChEBI" id="CHEBI:17263"/>
        <dbReference type="ChEBI" id="CHEBI:57540"/>
        <dbReference type="ChEBI" id="CHEBI:57945"/>
        <dbReference type="EC" id="1.1.1.62"/>
    </reaction>
    <physiologicalReaction direction="left-to-right" evidence="2">
        <dbReference type="Rhea" id="RHEA:24613"/>
    </physiologicalReaction>
</comment>
<comment type="catalytic activity">
    <reaction evidence="2">
        <text>cholate + NAD(+) = 3alpha,12alpha-dihydroxy-7-oxo-5beta-cholanate + NADH + H(+)</text>
        <dbReference type="Rhea" id="RHEA:19409"/>
        <dbReference type="ChEBI" id="CHEBI:11893"/>
        <dbReference type="ChEBI" id="CHEBI:15378"/>
        <dbReference type="ChEBI" id="CHEBI:29747"/>
        <dbReference type="ChEBI" id="CHEBI:57540"/>
        <dbReference type="ChEBI" id="CHEBI:57945"/>
        <dbReference type="EC" id="1.1.1.159"/>
    </reaction>
    <physiologicalReaction direction="left-to-right" evidence="2">
        <dbReference type="Rhea" id="RHEA:19410"/>
    </physiologicalReaction>
</comment>
<comment type="catalytic activity">
    <reaction evidence="2">
        <text>(3S)-3-hydroxybutanoyl-CoA + NAD(+) = acetoacetyl-CoA + NADH + H(+)</text>
        <dbReference type="Rhea" id="RHEA:30799"/>
        <dbReference type="ChEBI" id="CHEBI:15378"/>
        <dbReference type="ChEBI" id="CHEBI:57286"/>
        <dbReference type="ChEBI" id="CHEBI:57316"/>
        <dbReference type="ChEBI" id="CHEBI:57540"/>
        <dbReference type="ChEBI" id="CHEBI:57945"/>
    </reaction>
    <physiologicalReaction direction="left-to-right" evidence="2">
        <dbReference type="Rhea" id="RHEA:30800"/>
    </physiologicalReaction>
    <physiologicalReaction direction="right-to-left" evidence="2">
        <dbReference type="Rhea" id="RHEA:30801"/>
    </physiologicalReaction>
</comment>
<comment type="catalytic activity">
    <reaction evidence="2">
        <text>(3S)-hydroxyoctanoyl-CoA + NAD(+) = 3-oxooctanoyl-CoA + NADH + H(+)</text>
        <dbReference type="Rhea" id="RHEA:31195"/>
        <dbReference type="ChEBI" id="CHEBI:15378"/>
        <dbReference type="ChEBI" id="CHEBI:57540"/>
        <dbReference type="ChEBI" id="CHEBI:57945"/>
        <dbReference type="ChEBI" id="CHEBI:62617"/>
        <dbReference type="ChEBI" id="CHEBI:62619"/>
    </reaction>
    <physiologicalReaction direction="left-to-right" evidence="2">
        <dbReference type="Rhea" id="RHEA:31196"/>
    </physiologicalReaction>
    <physiologicalReaction direction="right-to-left" evidence="2">
        <dbReference type="Rhea" id="RHEA:31197"/>
    </physiologicalReaction>
</comment>
<comment type="catalytic activity">
    <reaction evidence="2">
        <text>(3S)-hydroxyhexadecanoyl-CoA + NAD(+) = 3-oxohexadecanoyl-CoA + NADH + H(+)</text>
        <dbReference type="Rhea" id="RHEA:31159"/>
        <dbReference type="ChEBI" id="CHEBI:15378"/>
        <dbReference type="ChEBI" id="CHEBI:57349"/>
        <dbReference type="ChEBI" id="CHEBI:57540"/>
        <dbReference type="ChEBI" id="CHEBI:57945"/>
        <dbReference type="ChEBI" id="CHEBI:62613"/>
    </reaction>
    <physiologicalReaction direction="left-to-right" evidence="2">
        <dbReference type="Rhea" id="RHEA:31160"/>
    </physiologicalReaction>
    <physiologicalReaction direction="right-to-left" evidence="2">
        <dbReference type="Rhea" id="RHEA:31161"/>
    </physiologicalReaction>
</comment>
<comment type="catalytic activity">
    <reaction evidence="2">
        <text>17beta-hydroxy-5alpha-androstan-3-one + NAD(+) = 5alpha-androstan-3,17-dione + NADH + H(+)</text>
        <dbReference type="Rhea" id="RHEA:41992"/>
        <dbReference type="ChEBI" id="CHEBI:15378"/>
        <dbReference type="ChEBI" id="CHEBI:15994"/>
        <dbReference type="ChEBI" id="CHEBI:16330"/>
        <dbReference type="ChEBI" id="CHEBI:57540"/>
        <dbReference type="ChEBI" id="CHEBI:57945"/>
    </reaction>
    <physiologicalReaction direction="left-to-right" evidence="2">
        <dbReference type="Rhea" id="RHEA:41993"/>
    </physiologicalReaction>
</comment>
<comment type="catalytic activity">
    <reaction evidence="2">
        <text>5alpha-pregnan-20beta-ol-3-one + NAD(+) = 5alpha-pregnane-3,20-dione + NADH + H(+)</text>
        <dbReference type="Rhea" id="RHEA:42008"/>
        <dbReference type="ChEBI" id="CHEBI:15378"/>
        <dbReference type="ChEBI" id="CHEBI:28952"/>
        <dbReference type="ChEBI" id="CHEBI:57540"/>
        <dbReference type="ChEBI" id="CHEBI:57945"/>
        <dbReference type="ChEBI" id="CHEBI:78594"/>
    </reaction>
    <physiologicalReaction direction="left-to-right" evidence="2">
        <dbReference type="Rhea" id="RHEA:42009"/>
    </physiologicalReaction>
</comment>
<comment type="catalytic activity">
    <reaction evidence="2">
        <text>3alpha-hydroxy-5alpha-pregnan-20-one + NAD(+) = 5alpha-pregnane-3,20-dione + NADH + H(+)</text>
        <dbReference type="Rhea" id="RHEA:41980"/>
        <dbReference type="ChEBI" id="CHEBI:15378"/>
        <dbReference type="ChEBI" id="CHEBI:28952"/>
        <dbReference type="ChEBI" id="CHEBI:50169"/>
        <dbReference type="ChEBI" id="CHEBI:57540"/>
        <dbReference type="ChEBI" id="CHEBI:57945"/>
    </reaction>
    <physiologicalReaction direction="left-to-right" evidence="2">
        <dbReference type="Rhea" id="RHEA:41981"/>
    </physiologicalReaction>
</comment>
<comment type="catalytic activity">
    <reaction evidence="2">
        <text>cortisone + NAD(+) = 17alpha-hydroxypregn-4-en-3,11,20-trione-21-al + NADH + H(+)</text>
        <dbReference type="Rhea" id="RHEA:42016"/>
        <dbReference type="ChEBI" id="CHEBI:15378"/>
        <dbReference type="ChEBI" id="CHEBI:16962"/>
        <dbReference type="ChEBI" id="CHEBI:57540"/>
        <dbReference type="ChEBI" id="CHEBI:57945"/>
        <dbReference type="ChEBI" id="CHEBI:78596"/>
    </reaction>
    <physiologicalReaction direction="left-to-right" evidence="2">
        <dbReference type="Rhea" id="RHEA:42017"/>
    </physiologicalReaction>
</comment>
<comment type="catalytic activity">
    <reaction evidence="2">
        <text>11-dehydrocorticosterone + NAD(+) = pregn-4-ene-3,11,20,21-tetraone + NADH + H(+)</text>
        <dbReference type="Rhea" id="RHEA:42020"/>
        <dbReference type="ChEBI" id="CHEBI:15378"/>
        <dbReference type="ChEBI" id="CHEBI:57540"/>
        <dbReference type="ChEBI" id="CHEBI:57945"/>
        <dbReference type="ChEBI" id="CHEBI:78600"/>
        <dbReference type="ChEBI" id="CHEBI:78601"/>
    </reaction>
    <physiologicalReaction direction="left-to-right" evidence="2">
        <dbReference type="Rhea" id="RHEA:42021"/>
    </physiologicalReaction>
</comment>
<comment type="catalytic activity">
    <reaction evidence="2">
        <text>cortisol + NAD(+) = 11beta,17alpha-dihydroxypregn-4-ene-3,20,21-trione + NADH + H(+)</text>
        <dbReference type="Rhea" id="RHEA:42012"/>
        <dbReference type="ChEBI" id="CHEBI:15378"/>
        <dbReference type="ChEBI" id="CHEBI:17650"/>
        <dbReference type="ChEBI" id="CHEBI:57540"/>
        <dbReference type="ChEBI" id="CHEBI:57945"/>
        <dbReference type="ChEBI" id="CHEBI:78595"/>
    </reaction>
    <physiologicalReaction direction="left-to-right" evidence="2">
        <dbReference type="Rhea" id="RHEA:42013"/>
    </physiologicalReaction>
</comment>
<comment type="catalytic activity">
    <reaction evidence="2">
        <text>chenodeoxycholate + NAD(+) = 7-oxolithocholate + NADH + H(+)</text>
        <dbReference type="Rhea" id="RHEA:42036"/>
        <dbReference type="ChEBI" id="CHEBI:15378"/>
        <dbReference type="ChEBI" id="CHEBI:36234"/>
        <dbReference type="ChEBI" id="CHEBI:57540"/>
        <dbReference type="ChEBI" id="CHEBI:57945"/>
        <dbReference type="ChEBI" id="CHEBI:78605"/>
    </reaction>
    <physiologicalReaction direction="left-to-right" evidence="2">
        <dbReference type="Rhea" id="RHEA:42037"/>
    </physiologicalReaction>
</comment>
<comment type="catalytic activity">
    <reaction evidence="2">
        <text>ursodeoxycholate + NAD(+) = 7-oxolithocholate + NADH + H(+)</text>
        <dbReference type="Rhea" id="RHEA:42028"/>
        <dbReference type="ChEBI" id="CHEBI:15378"/>
        <dbReference type="ChEBI" id="CHEBI:57540"/>
        <dbReference type="ChEBI" id="CHEBI:57945"/>
        <dbReference type="ChEBI" id="CHEBI:78604"/>
        <dbReference type="ChEBI" id="CHEBI:78605"/>
    </reaction>
    <physiologicalReaction direction="left-to-right" evidence="2">
        <dbReference type="Rhea" id="RHEA:42029"/>
    </physiologicalReaction>
</comment>
<comment type="catalytic activity">
    <reaction evidence="2">
        <text>3beta,7beta-dihydroxy-5beta-cholan-24-oate + NAD(+) = 3beta-hydroxy-7-oxo-5beta-cholan-24-oate + NADH + H(+)</text>
        <dbReference type="Rhea" id="RHEA:42024"/>
        <dbReference type="ChEBI" id="CHEBI:15378"/>
        <dbReference type="ChEBI" id="CHEBI:57540"/>
        <dbReference type="ChEBI" id="CHEBI:57945"/>
        <dbReference type="ChEBI" id="CHEBI:78602"/>
        <dbReference type="ChEBI" id="CHEBI:78603"/>
    </reaction>
    <physiologicalReaction direction="left-to-right" evidence="2">
        <dbReference type="Rhea" id="RHEA:42025"/>
    </physiologicalReaction>
</comment>
<comment type="pathway">
    <text evidence="2">Amino-acid degradation; L-isoleucine degradation.</text>
</comment>
<comment type="pathway">
    <text evidence="2">Lipid metabolism; fatty acid beta-oxidation.</text>
</comment>
<comment type="pathway">
    <text evidence="2">Steroid metabolism.</text>
</comment>
<comment type="pathway">
    <text evidence="2">Lipid metabolism; bile acid biosynthesis.</text>
</comment>
<comment type="subunit">
    <text evidence="2">Homotetramer. Component of mitochondrial ribonuclease P, a complex composed of TRMT10C/MRPP1, HSD17B10/MRPP2 and PRORP/MRPP3. Interacts with TRMT10C/MRPP1; forming the MRPP1-MRPP2 subcomplex of the mitochondrial ribonuclease P complex.</text>
</comment>
<comment type="subcellular location">
    <subcellularLocation>
        <location evidence="2">Mitochondrion</location>
    </subcellularLocation>
    <subcellularLocation>
        <location evidence="2">Mitochondrion matrix</location>
        <location evidence="2">Mitochondrion nucleoid</location>
    </subcellularLocation>
</comment>
<comment type="similarity">
    <text evidence="4">Belongs to the short-chain dehydrogenases/reductases (SDR) family.</text>
</comment>
<sequence>MAAACRSVKGLVALITGGASGLGLATAERLVGQGATAVLLDLPNSDGETQAKKLGKSCAFAPADVTSEKDVQAALTLAREKFGRVDVAVNCAGIAVASKTYNLKKSQAHTLEDFQRVINVNLIGTFNVIRLVAGEMGQNEPDQGGQRGVIINTASVAAFEGQVGQAAYSASKGGIVGMTLPIARDLAPMGIRVMTIAPGLFGTPLLTTLPDKVRNFLASQVPFPSRLGDPAEYAHLVQAIIENSFLNGEVIRLDGAIRMQP</sequence>
<protein>
    <recommendedName>
        <fullName>3-hydroxyacyl-CoA dehydrogenase type-2</fullName>
        <ecNumber evidence="2">1.1.1.35</ecNumber>
    </recommendedName>
    <alternativeName>
        <fullName>17-beta-estradiol 17-dehydrogenase</fullName>
        <ecNumber evidence="2">1.1.1.62</ecNumber>
    </alternativeName>
    <alternativeName>
        <fullName>2-methyl-3-hydroxybutyryl-CoA dehydrogenase</fullName>
        <shortName>MHBD</shortName>
    </alternativeName>
    <alternativeName>
        <fullName>3-alpha-(17-beta)-hydroxysteroid dehydrogenase (NAD(+))</fullName>
        <ecNumber evidence="2">1.1.1.239</ecNumber>
    </alternativeName>
    <alternativeName>
        <fullName>3-hydroxy-2-methylbutyryl-CoA dehydrogenase</fullName>
        <ecNumber evidence="2">1.1.1.178</ecNumber>
    </alternativeName>
    <alternativeName>
        <fullName>3-hydroxyacyl-CoA dehydrogenase type II</fullName>
    </alternativeName>
    <alternativeName>
        <fullName>3alpha(or 20beta)-hydroxysteroid dehydrogenase</fullName>
        <ecNumber evidence="2">1.1.1.53</ecNumber>
    </alternativeName>
    <alternativeName>
        <fullName>7-alpha-hydroxysteroid dehydrogenase</fullName>
        <ecNumber evidence="2">1.1.1.159</ecNumber>
    </alternativeName>
    <alternativeName>
        <fullName>Endoplasmic reticulum-associated amyloid beta-peptide-binding protein</fullName>
    </alternativeName>
    <alternativeName>
        <fullName>Mitochondrial ribonuclease P protein 2</fullName>
        <shortName>Mitochondrial RNase P protein 2</shortName>
    </alternativeName>
    <alternativeName>
        <fullName>Short chain dehydrogenase/reductase family 5C member 1</fullName>
    </alternativeName>
    <alternativeName>
        <fullName>Short-chain type dehydrogenase/reductase XH98G2</fullName>
    </alternativeName>
    <alternativeName>
        <fullName>Type II HADH</fullName>
    </alternativeName>
</protein>
<dbReference type="EC" id="1.1.1.35" evidence="2"/>
<dbReference type="EC" id="1.1.1.62" evidence="2"/>
<dbReference type="EC" id="1.1.1.239" evidence="2"/>
<dbReference type="EC" id="1.1.1.178" evidence="2"/>
<dbReference type="EC" id="1.1.1.53" evidence="2"/>
<dbReference type="EC" id="1.1.1.159" evidence="2"/>
<dbReference type="EMBL" id="AB002156">
    <property type="protein sequence ID" value="BAA19510.1"/>
    <property type="molecule type" value="mRNA"/>
</dbReference>
<dbReference type="EMBL" id="BC110264">
    <property type="protein sequence ID" value="AAI10265.1"/>
    <property type="molecule type" value="mRNA"/>
</dbReference>
<dbReference type="RefSeq" id="NP_776759.1">
    <property type="nucleotide sequence ID" value="NM_174334.3"/>
</dbReference>
<dbReference type="SMR" id="O02691"/>
<dbReference type="FunCoup" id="O02691">
    <property type="interactions" value="1054"/>
</dbReference>
<dbReference type="IntAct" id="O02691">
    <property type="interactions" value="1"/>
</dbReference>
<dbReference type="STRING" id="9913.ENSBTAP00000023642"/>
<dbReference type="PaxDb" id="9913-ENSBTAP00000023642"/>
<dbReference type="PeptideAtlas" id="O02691"/>
<dbReference type="GeneID" id="281809"/>
<dbReference type="KEGG" id="bta:281809"/>
<dbReference type="CTD" id="3028"/>
<dbReference type="VEuPathDB" id="HostDB:ENSBTAG00000017779"/>
<dbReference type="eggNOG" id="KOG1199">
    <property type="taxonomic scope" value="Eukaryota"/>
</dbReference>
<dbReference type="HOGENOM" id="CLU_010194_42_0_1"/>
<dbReference type="InParanoid" id="O02691"/>
<dbReference type="OMA" id="RHIFEND"/>
<dbReference type="OrthoDB" id="1274115at2759"/>
<dbReference type="TreeFam" id="TF354307"/>
<dbReference type="BRENDA" id="1.1.1.135">
    <property type="organism ID" value="908"/>
</dbReference>
<dbReference type="Reactome" id="R-BTA-70895">
    <property type="pathway name" value="Branched-chain amino acid catabolism"/>
</dbReference>
<dbReference type="Reactome" id="R-BTA-9837999">
    <property type="pathway name" value="Mitochondrial protein degradation"/>
</dbReference>
<dbReference type="UniPathway" id="UPA00221"/>
<dbReference type="UniPathway" id="UPA00364"/>
<dbReference type="UniPathway" id="UPA00659"/>
<dbReference type="Proteomes" id="UP000009136">
    <property type="component" value="Chromosome X"/>
</dbReference>
<dbReference type="Bgee" id="ENSBTAG00000017779">
    <property type="expression patterns" value="Expressed in liver and 106 other cell types or tissues"/>
</dbReference>
<dbReference type="GO" id="GO:0042645">
    <property type="term" value="C:mitochondrial nucleoid"/>
    <property type="evidence" value="ECO:0000250"/>
    <property type="project" value="UniProtKB"/>
</dbReference>
<dbReference type="GO" id="GO:0030678">
    <property type="term" value="C:mitochondrial ribonuclease P complex"/>
    <property type="evidence" value="ECO:0000250"/>
    <property type="project" value="UniProtKB"/>
</dbReference>
<dbReference type="GO" id="GO:0005739">
    <property type="term" value="C:mitochondrion"/>
    <property type="evidence" value="ECO:0000250"/>
    <property type="project" value="UniProtKB"/>
</dbReference>
<dbReference type="GO" id="GO:0044594">
    <property type="term" value="F:17-beta-hydroxysteroid dehydrogenase (NAD+) activity"/>
    <property type="evidence" value="ECO:0000250"/>
    <property type="project" value="UniProtKB"/>
</dbReference>
<dbReference type="GO" id="GO:0047015">
    <property type="term" value="F:3-hydroxy-2-methylbutyryl-CoA dehydrogenase activity"/>
    <property type="evidence" value="ECO:0000250"/>
    <property type="project" value="UniProtKB"/>
</dbReference>
<dbReference type="GO" id="GO:0003857">
    <property type="term" value="F:3-hydroxyacyl-CoA dehydrogenase activity"/>
    <property type="evidence" value="ECO:0000250"/>
    <property type="project" value="UniProtKB"/>
</dbReference>
<dbReference type="GO" id="GO:0047044">
    <property type="term" value="F:androstan-3-alpha,17-beta-diol dehydrogenase (NAD+) activity"/>
    <property type="evidence" value="ECO:0007669"/>
    <property type="project" value="UniProtKB-EC"/>
</dbReference>
<dbReference type="GO" id="GO:0106281">
    <property type="term" value="F:chenodeoxycholate 7-alpha-dehydrogenase (NAD+) activity"/>
    <property type="evidence" value="ECO:0000250"/>
    <property type="project" value="UniProtKB"/>
</dbReference>
<dbReference type="GO" id="GO:0008709">
    <property type="term" value="F:cholate 7-alpha-dehydrogenase (NAD+) activity"/>
    <property type="evidence" value="ECO:0000250"/>
    <property type="project" value="UniProtKB"/>
</dbReference>
<dbReference type="GO" id="GO:0004303">
    <property type="term" value="F:estradiol 17-beta-dehydrogenase [NAD(P)+] activity"/>
    <property type="evidence" value="ECO:0000318"/>
    <property type="project" value="GO_Central"/>
</dbReference>
<dbReference type="GO" id="GO:0106282">
    <property type="term" value="F:isoursodeoxycholate 7-beta-dehydrogenase (NAD+) activity"/>
    <property type="evidence" value="ECO:0000250"/>
    <property type="project" value="UniProtKB"/>
</dbReference>
<dbReference type="GO" id="GO:0047035">
    <property type="term" value="F:testosterone dehydrogenase (NAD+) activity"/>
    <property type="evidence" value="ECO:0000250"/>
    <property type="project" value="UniProtKB"/>
</dbReference>
<dbReference type="GO" id="GO:0030283">
    <property type="term" value="F:testosterone dehydrogenase [NAD(P)+] activity"/>
    <property type="evidence" value="ECO:0000250"/>
    <property type="project" value="UniProtKB"/>
</dbReference>
<dbReference type="GO" id="GO:0000049">
    <property type="term" value="F:tRNA binding"/>
    <property type="evidence" value="ECO:0000250"/>
    <property type="project" value="UniProtKB"/>
</dbReference>
<dbReference type="GO" id="GO:0106283">
    <property type="term" value="F:ursodeoxycholate 7-beta-dehydrogenase (NAD+) activity"/>
    <property type="evidence" value="ECO:0000250"/>
    <property type="project" value="UniProtKB"/>
</dbReference>
<dbReference type="GO" id="GO:0008209">
    <property type="term" value="P:androgen metabolic process"/>
    <property type="evidence" value="ECO:0000250"/>
    <property type="project" value="UniProtKB"/>
</dbReference>
<dbReference type="GO" id="GO:0006699">
    <property type="term" value="P:bile acid biosynthetic process"/>
    <property type="evidence" value="ECO:0000250"/>
    <property type="project" value="UniProtKB"/>
</dbReference>
<dbReference type="GO" id="GO:0062173">
    <property type="term" value="P:brexanolone metabolic process"/>
    <property type="evidence" value="ECO:0000250"/>
    <property type="project" value="UniProtKB"/>
</dbReference>
<dbReference type="GO" id="GO:0008207">
    <property type="term" value="P:C21-steroid hormone metabolic process"/>
    <property type="evidence" value="ECO:0000250"/>
    <property type="project" value="UniProtKB"/>
</dbReference>
<dbReference type="GO" id="GO:0008210">
    <property type="term" value="P:estrogen metabolic process"/>
    <property type="evidence" value="ECO:0000250"/>
    <property type="project" value="UniProtKB"/>
</dbReference>
<dbReference type="GO" id="GO:0006635">
    <property type="term" value="P:fatty acid beta-oxidation"/>
    <property type="evidence" value="ECO:0000250"/>
    <property type="project" value="UniProtKB"/>
</dbReference>
<dbReference type="GO" id="GO:0006631">
    <property type="term" value="P:fatty acid metabolic process"/>
    <property type="evidence" value="ECO:0000318"/>
    <property type="project" value="GO_Central"/>
</dbReference>
<dbReference type="GO" id="GO:0006550">
    <property type="term" value="P:isoleucine catabolic process"/>
    <property type="evidence" value="ECO:0000250"/>
    <property type="project" value="UniProtKB"/>
</dbReference>
<dbReference type="GO" id="GO:1990180">
    <property type="term" value="P:mitochondrial tRNA 3'-end processing"/>
    <property type="evidence" value="ECO:0000250"/>
    <property type="project" value="UniProtKB"/>
</dbReference>
<dbReference type="GO" id="GO:0097745">
    <property type="term" value="P:mitochondrial tRNA 5'-end processing"/>
    <property type="evidence" value="ECO:0000250"/>
    <property type="project" value="UniProtKB"/>
</dbReference>
<dbReference type="GO" id="GO:0070901">
    <property type="term" value="P:mitochondrial tRNA methylation"/>
    <property type="evidence" value="ECO:0000250"/>
    <property type="project" value="UniProtKB"/>
</dbReference>
<dbReference type="GO" id="GO:0051289">
    <property type="term" value="P:protein homotetramerization"/>
    <property type="evidence" value="ECO:0000250"/>
    <property type="project" value="UniProtKB"/>
</dbReference>
<dbReference type="CDD" id="cd05371">
    <property type="entry name" value="HSD10-like_SDR_c"/>
    <property type="match status" value="1"/>
</dbReference>
<dbReference type="FunFam" id="3.40.50.720:FF:000215">
    <property type="entry name" value="3-hydroxyacyl-CoA dehydrogenase type-2"/>
    <property type="match status" value="1"/>
</dbReference>
<dbReference type="Gene3D" id="3.40.50.720">
    <property type="entry name" value="NAD(P)-binding Rossmann-like Domain"/>
    <property type="match status" value="1"/>
</dbReference>
<dbReference type="InterPro" id="IPR036291">
    <property type="entry name" value="NAD(P)-bd_dom_sf"/>
</dbReference>
<dbReference type="InterPro" id="IPR020904">
    <property type="entry name" value="Sc_DH/Rdtase_CS"/>
</dbReference>
<dbReference type="InterPro" id="IPR002347">
    <property type="entry name" value="SDR_fam"/>
</dbReference>
<dbReference type="PANTHER" id="PTHR43658:SF8">
    <property type="entry name" value="17-BETA-HYDROXYSTEROID DEHYDROGENASE 14-RELATED"/>
    <property type="match status" value="1"/>
</dbReference>
<dbReference type="PANTHER" id="PTHR43658">
    <property type="entry name" value="SHORT-CHAIN DEHYDROGENASE/REDUCTASE"/>
    <property type="match status" value="1"/>
</dbReference>
<dbReference type="Pfam" id="PF00106">
    <property type="entry name" value="adh_short"/>
    <property type="match status" value="1"/>
</dbReference>
<dbReference type="PRINTS" id="PR00081">
    <property type="entry name" value="GDHRDH"/>
</dbReference>
<dbReference type="PRINTS" id="PR00080">
    <property type="entry name" value="SDRFAMILY"/>
</dbReference>
<dbReference type="SMART" id="SM00822">
    <property type="entry name" value="PKS_KR"/>
    <property type="match status" value="1"/>
</dbReference>
<dbReference type="SUPFAM" id="SSF51735">
    <property type="entry name" value="NAD(P)-binding Rossmann-fold domains"/>
    <property type="match status" value="1"/>
</dbReference>
<dbReference type="PROSITE" id="PS00061">
    <property type="entry name" value="ADH_SHORT"/>
    <property type="match status" value="1"/>
</dbReference>
<feature type="initiator methionine" description="Removed" evidence="2">
    <location>
        <position position="1"/>
    </location>
</feature>
<feature type="chain" id="PRO_0000054809" description="3-hydroxyacyl-CoA dehydrogenase type-2">
    <location>
        <begin position="2"/>
        <end position="261"/>
    </location>
</feature>
<feature type="active site" description="Proton acceptor" evidence="3">
    <location>
        <position position="168"/>
    </location>
</feature>
<feature type="binding site" evidence="2">
    <location>
        <position position="20"/>
    </location>
    <ligand>
        <name>NAD(+)</name>
        <dbReference type="ChEBI" id="CHEBI:57540"/>
    </ligand>
</feature>
<feature type="binding site" evidence="2">
    <location>
        <position position="22"/>
    </location>
    <ligand>
        <name>NAD(+)</name>
        <dbReference type="ChEBI" id="CHEBI:57540"/>
    </ligand>
</feature>
<feature type="binding site" evidence="2">
    <location>
        <position position="41"/>
    </location>
    <ligand>
        <name>NAD(+)</name>
        <dbReference type="ChEBI" id="CHEBI:57540"/>
    </ligand>
</feature>
<feature type="binding site" evidence="2">
    <location>
        <position position="64"/>
    </location>
    <ligand>
        <name>NAD(+)</name>
        <dbReference type="ChEBI" id="CHEBI:57540"/>
    </ligand>
</feature>
<feature type="binding site" evidence="2">
    <location>
        <position position="65"/>
    </location>
    <ligand>
        <name>NAD(+)</name>
        <dbReference type="ChEBI" id="CHEBI:57540"/>
    </ligand>
</feature>
<feature type="binding site" evidence="2">
    <location>
        <position position="91"/>
    </location>
    <ligand>
        <name>NAD(+)</name>
        <dbReference type="ChEBI" id="CHEBI:57540"/>
    </ligand>
</feature>
<feature type="binding site" evidence="2">
    <location>
        <position position="155"/>
    </location>
    <ligand>
        <name>substrate</name>
    </ligand>
</feature>
<feature type="binding site" evidence="2">
    <location>
        <position position="168"/>
    </location>
    <ligand>
        <name>NAD(+)</name>
        <dbReference type="ChEBI" id="CHEBI:57540"/>
    </ligand>
</feature>
<feature type="binding site" evidence="2">
    <location>
        <position position="172"/>
    </location>
    <ligand>
        <name>NAD(+)</name>
        <dbReference type="ChEBI" id="CHEBI:57540"/>
    </ligand>
</feature>
<feature type="binding site" evidence="2">
    <location>
        <position position="201"/>
    </location>
    <ligand>
        <name>NAD(+)</name>
        <dbReference type="ChEBI" id="CHEBI:57540"/>
    </ligand>
</feature>
<feature type="binding site" evidence="2">
    <location>
        <position position="203"/>
    </location>
    <ligand>
        <name>NAD(+)</name>
        <dbReference type="ChEBI" id="CHEBI:57540"/>
    </ligand>
</feature>
<feature type="modified residue" description="N-acetylalanine" evidence="2">
    <location>
        <position position="2"/>
    </location>
</feature>
<feature type="modified residue" description="N6-acetyllysine; alternate" evidence="1">
    <location>
        <position position="53"/>
    </location>
</feature>
<feature type="modified residue" description="N6-succinyllysine; alternate" evidence="1">
    <location>
        <position position="53"/>
    </location>
</feature>
<feature type="modified residue" description="N6-acetyllysine" evidence="1">
    <location>
        <position position="69"/>
    </location>
</feature>
<feature type="modified residue" description="N6-acetyllysine" evidence="1">
    <location>
        <position position="99"/>
    </location>
</feature>
<feature type="modified residue" description="N6-acetyllysine" evidence="1">
    <location>
        <position position="105"/>
    </location>
</feature>
<feature type="modified residue" description="N6-acetyllysine; alternate" evidence="1">
    <location>
        <position position="212"/>
    </location>
</feature>
<feature type="modified residue" description="N6-succinyllysine; alternate" evidence="1">
    <location>
        <position position="212"/>
    </location>
</feature>
<reference key="1">
    <citation type="journal article" date="1997" name="Biochim. Biophys. Acta">
        <title>Cloning and expression of cDNA for a newly identified isozyme of bovine liver 3-hydroxyacyl-CoA dehydrogenase and its import into mitochondria.</title>
        <authorList>
            <person name="Furuta S."/>
            <person name="Kobayashi A."/>
            <person name="Miyazawa S."/>
            <person name="Hashimoto T."/>
        </authorList>
    </citation>
    <scope>NUCLEOTIDE SEQUENCE [MRNA]</scope>
    <scope>PARTIAL PROTEIN SEQUENCE</scope>
    <source>
        <tissue>Liver</tissue>
    </source>
</reference>
<reference key="2">
    <citation type="submission" date="2005-11" db="EMBL/GenBank/DDBJ databases">
        <authorList>
            <consortium name="NIH - Mammalian Gene Collection (MGC) project"/>
        </authorList>
    </citation>
    <scope>NUCLEOTIDE SEQUENCE [LARGE SCALE MRNA]</scope>
    <source>
        <strain>Crossbred X Angus</strain>
        <tissue>Liver</tissue>
    </source>
</reference>
<name>HCD2_BOVIN</name>
<evidence type="ECO:0000250" key="1">
    <source>
        <dbReference type="UniProtKB" id="O08756"/>
    </source>
</evidence>
<evidence type="ECO:0000250" key="2">
    <source>
        <dbReference type="UniProtKB" id="Q99714"/>
    </source>
</evidence>
<evidence type="ECO:0000255" key="3">
    <source>
        <dbReference type="PROSITE-ProRule" id="PRU10001"/>
    </source>
</evidence>
<evidence type="ECO:0000305" key="4"/>
<gene>
    <name type="primary">HSD17B10</name>
    <name type="synonym">HADH2</name>
</gene>
<accession>O02691</accession>
<accession>Q2TBG6</accession>
<proteinExistence type="evidence at protein level"/>
<keyword id="KW-0007">Acetylation</keyword>
<keyword id="KW-0903">Direct protein sequencing</keyword>
<keyword id="KW-0276">Fatty acid metabolism</keyword>
<keyword id="KW-0443">Lipid metabolism</keyword>
<keyword id="KW-0496">Mitochondrion</keyword>
<keyword id="KW-1135">Mitochondrion nucleoid</keyword>
<keyword id="KW-0520">NAD</keyword>
<keyword id="KW-0560">Oxidoreductase</keyword>
<keyword id="KW-1185">Reference proteome</keyword>
<keyword id="KW-0753">Steroid metabolism</keyword>
<keyword id="KW-0819">tRNA processing</keyword>
<organism>
    <name type="scientific">Bos taurus</name>
    <name type="common">Bovine</name>
    <dbReference type="NCBI Taxonomy" id="9913"/>
    <lineage>
        <taxon>Eukaryota</taxon>
        <taxon>Metazoa</taxon>
        <taxon>Chordata</taxon>
        <taxon>Craniata</taxon>
        <taxon>Vertebrata</taxon>
        <taxon>Euteleostomi</taxon>
        <taxon>Mammalia</taxon>
        <taxon>Eutheria</taxon>
        <taxon>Laurasiatheria</taxon>
        <taxon>Artiodactyla</taxon>
        <taxon>Ruminantia</taxon>
        <taxon>Pecora</taxon>
        <taxon>Bovidae</taxon>
        <taxon>Bovinae</taxon>
        <taxon>Bos</taxon>
    </lineage>
</organism>